<comment type="catalytic activity">
    <reaction evidence="1">
        <text>beta-D-fructose 1,6-bisphosphate + H2O = beta-D-fructose 6-phosphate + phosphate</text>
        <dbReference type="Rhea" id="RHEA:11064"/>
        <dbReference type="ChEBI" id="CHEBI:15377"/>
        <dbReference type="ChEBI" id="CHEBI:32966"/>
        <dbReference type="ChEBI" id="CHEBI:43474"/>
        <dbReference type="ChEBI" id="CHEBI:57634"/>
        <dbReference type="EC" id="3.1.3.11"/>
    </reaction>
</comment>
<comment type="cofactor">
    <cofactor evidence="1">
        <name>Mg(2+)</name>
        <dbReference type="ChEBI" id="CHEBI:18420"/>
    </cofactor>
    <text evidence="1">Binds 2 magnesium ions per subunit.</text>
</comment>
<comment type="pathway">
    <text evidence="1">Carbohydrate biosynthesis; gluconeogenesis.</text>
</comment>
<comment type="subunit">
    <text evidence="1">Homotetramer.</text>
</comment>
<comment type="subcellular location">
    <subcellularLocation>
        <location evidence="1">Cytoplasm</location>
    </subcellularLocation>
</comment>
<comment type="similarity">
    <text evidence="1">Belongs to the FBPase class 1 family.</text>
</comment>
<reference key="1">
    <citation type="journal article" date="2008" name="J. Bacteriol.">
        <title>Insights into plant cell wall degradation from the genome sequence of the soil bacterium Cellvibrio japonicus.</title>
        <authorList>
            <person name="DeBoy R.T."/>
            <person name="Mongodin E.F."/>
            <person name="Fouts D.E."/>
            <person name="Tailford L.E."/>
            <person name="Khouri H."/>
            <person name="Emerson J.B."/>
            <person name="Mohamoud Y."/>
            <person name="Watkins K."/>
            <person name="Henrissat B."/>
            <person name="Gilbert H.J."/>
            <person name="Nelson K.E."/>
        </authorList>
    </citation>
    <scope>NUCLEOTIDE SEQUENCE [LARGE SCALE GENOMIC DNA]</scope>
    <source>
        <strain>Ueda107</strain>
    </source>
</reference>
<name>F16PA_CELJU</name>
<proteinExistence type="inferred from homology"/>
<keyword id="KW-0119">Carbohydrate metabolism</keyword>
<keyword id="KW-0963">Cytoplasm</keyword>
<keyword id="KW-0378">Hydrolase</keyword>
<keyword id="KW-0460">Magnesium</keyword>
<keyword id="KW-0479">Metal-binding</keyword>
<keyword id="KW-1185">Reference proteome</keyword>
<organism>
    <name type="scientific">Cellvibrio japonicus (strain Ueda107)</name>
    <name type="common">Pseudomonas fluorescens subsp. cellulosa</name>
    <dbReference type="NCBI Taxonomy" id="498211"/>
    <lineage>
        <taxon>Bacteria</taxon>
        <taxon>Pseudomonadati</taxon>
        <taxon>Pseudomonadota</taxon>
        <taxon>Gammaproteobacteria</taxon>
        <taxon>Cellvibrionales</taxon>
        <taxon>Cellvibrionaceae</taxon>
        <taxon>Cellvibrio</taxon>
    </lineage>
</organism>
<accession>B3PGC8</accession>
<sequence>MQRLVPTLRRDGVNPELIPVIRTLLAATKEIAFRVRQGALSGVLGSTLDENIQGETQKQLDVIANQLIKDLLLEEPQVRAIASEEEDTVVAGNPKGAYTVAFDPLDGSSNIDINGQIGTIFTIYPARDDVPADSEAQFQQPGHQQVCAGYVLYGPSTILVMTTGGPTRGYTLDATHGSYLLTQAQLSVPLNTQEFALNMANQRFWSAPFQRYVQDLLLGETGPRAKRFNMRWNAAMVGDVHRVLTRGGIFMYPSDNRNPRQPAKLRLLYEANPMAMLTENAGGKAWSENQRILNIQPDSLHQRVAVILGSANEVDVCMSYLLE</sequence>
<evidence type="ECO:0000255" key="1">
    <source>
        <dbReference type="HAMAP-Rule" id="MF_01855"/>
    </source>
</evidence>
<feature type="chain" id="PRO_0000364519" description="Fructose-1,6-bisphosphatase class 1">
    <location>
        <begin position="1"/>
        <end position="323"/>
    </location>
</feature>
<feature type="binding site" evidence="1">
    <location>
        <position position="84"/>
    </location>
    <ligand>
        <name>Mg(2+)</name>
        <dbReference type="ChEBI" id="CHEBI:18420"/>
        <label>1</label>
    </ligand>
</feature>
<feature type="binding site" evidence="1">
    <location>
        <position position="103"/>
    </location>
    <ligand>
        <name>Mg(2+)</name>
        <dbReference type="ChEBI" id="CHEBI:18420"/>
        <label>1</label>
    </ligand>
</feature>
<feature type="binding site" evidence="1">
    <location>
        <position position="103"/>
    </location>
    <ligand>
        <name>Mg(2+)</name>
        <dbReference type="ChEBI" id="CHEBI:18420"/>
        <label>2</label>
    </ligand>
</feature>
<feature type="binding site" evidence="1">
    <location>
        <position position="105"/>
    </location>
    <ligand>
        <name>Mg(2+)</name>
        <dbReference type="ChEBI" id="CHEBI:18420"/>
        <label>1</label>
    </ligand>
</feature>
<feature type="binding site" evidence="1">
    <location>
        <begin position="106"/>
        <end position="109"/>
    </location>
    <ligand>
        <name>substrate</name>
    </ligand>
</feature>
<feature type="binding site" evidence="1">
    <location>
        <position position="106"/>
    </location>
    <ligand>
        <name>Mg(2+)</name>
        <dbReference type="ChEBI" id="CHEBI:18420"/>
        <label>2</label>
    </ligand>
</feature>
<feature type="binding site" evidence="1">
    <location>
        <position position="198"/>
    </location>
    <ligand>
        <name>substrate</name>
    </ligand>
</feature>
<feature type="binding site" evidence="1">
    <location>
        <position position="264"/>
    </location>
    <ligand>
        <name>substrate</name>
    </ligand>
</feature>
<feature type="binding site" evidence="1">
    <location>
        <position position="270"/>
    </location>
    <ligand>
        <name>Mg(2+)</name>
        <dbReference type="ChEBI" id="CHEBI:18420"/>
        <label>2</label>
    </ligand>
</feature>
<protein>
    <recommendedName>
        <fullName evidence="1">Fructose-1,6-bisphosphatase class 1</fullName>
        <shortName evidence="1">FBPase class 1</shortName>
        <ecNumber evidence="1">3.1.3.11</ecNumber>
    </recommendedName>
    <alternativeName>
        <fullName evidence="1">D-fructose-1,6-bisphosphate 1-phosphohydrolase class 1</fullName>
    </alternativeName>
</protein>
<gene>
    <name evidence="1" type="primary">fbp</name>
    <name type="ordered locus">CJA_0183</name>
</gene>
<dbReference type="EC" id="3.1.3.11" evidence="1"/>
<dbReference type="EMBL" id="CP000934">
    <property type="protein sequence ID" value="ACE85656.1"/>
    <property type="molecule type" value="Genomic_DNA"/>
</dbReference>
<dbReference type="RefSeq" id="WP_012485866.1">
    <property type="nucleotide sequence ID" value="NC_010995.1"/>
</dbReference>
<dbReference type="SMR" id="B3PGC8"/>
<dbReference type="STRING" id="498211.CJA_0183"/>
<dbReference type="KEGG" id="cja:CJA_0183"/>
<dbReference type="eggNOG" id="COG0158">
    <property type="taxonomic scope" value="Bacteria"/>
</dbReference>
<dbReference type="HOGENOM" id="CLU_039977_0_0_6"/>
<dbReference type="OrthoDB" id="9806756at2"/>
<dbReference type="UniPathway" id="UPA00138"/>
<dbReference type="Proteomes" id="UP000001036">
    <property type="component" value="Chromosome"/>
</dbReference>
<dbReference type="GO" id="GO:0005829">
    <property type="term" value="C:cytosol"/>
    <property type="evidence" value="ECO:0007669"/>
    <property type="project" value="TreeGrafter"/>
</dbReference>
<dbReference type="GO" id="GO:0042132">
    <property type="term" value="F:fructose 1,6-bisphosphate 1-phosphatase activity"/>
    <property type="evidence" value="ECO:0007669"/>
    <property type="project" value="UniProtKB-UniRule"/>
</dbReference>
<dbReference type="GO" id="GO:0000287">
    <property type="term" value="F:magnesium ion binding"/>
    <property type="evidence" value="ECO:0007669"/>
    <property type="project" value="UniProtKB-UniRule"/>
</dbReference>
<dbReference type="GO" id="GO:0030388">
    <property type="term" value="P:fructose 1,6-bisphosphate metabolic process"/>
    <property type="evidence" value="ECO:0007669"/>
    <property type="project" value="TreeGrafter"/>
</dbReference>
<dbReference type="GO" id="GO:0006002">
    <property type="term" value="P:fructose 6-phosphate metabolic process"/>
    <property type="evidence" value="ECO:0007669"/>
    <property type="project" value="TreeGrafter"/>
</dbReference>
<dbReference type="GO" id="GO:0006000">
    <property type="term" value="P:fructose metabolic process"/>
    <property type="evidence" value="ECO:0007669"/>
    <property type="project" value="TreeGrafter"/>
</dbReference>
<dbReference type="GO" id="GO:0006094">
    <property type="term" value="P:gluconeogenesis"/>
    <property type="evidence" value="ECO:0007669"/>
    <property type="project" value="UniProtKB-UniRule"/>
</dbReference>
<dbReference type="GO" id="GO:0005986">
    <property type="term" value="P:sucrose biosynthetic process"/>
    <property type="evidence" value="ECO:0007669"/>
    <property type="project" value="TreeGrafter"/>
</dbReference>
<dbReference type="CDD" id="cd00354">
    <property type="entry name" value="FBPase"/>
    <property type="match status" value="1"/>
</dbReference>
<dbReference type="FunFam" id="3.40.190.80:FF:000011">
    <property type="entry name" value="Fructose-1,6-bisphosphatase class 1"/>
    <property type="match status" value="1"/>
</dbReference>
<dbReference type="Gene3D" id="3.40.190.80">
    <property type="match status" value="1"/>
</dbReference>
<dbReference type="Gene3D" id="3.30.540.10">
    <property type="entry name" value="Fructose-1,6-Bisphosphatase, subunit A, domain 1"/>
    <property type="match status" value="1"/>
</dbReference>
<dbReference type="HAMAP" id="MF_01855">
    <property type="entry name" value="FBPase_class1"/>
    <property type="match status" value="1"/>
</dbReference>
<dbReference type="InterPro" id="IPR044015">
    <property type="entry name" value="FBPase_C_dom"/>
</dbReference>
<dbReference type="InterPro" id="IPR000146">
    <property type="entry name" value="FBPase_class-1"/>
</dbReference>
<dbReference type="InterPro" id="IPR033391">
    <property type="entry name" value="FBPase_N"/>
</dbReference>
<dbReference type="InterPro" id="IPR028343">
    <property type="entry name" value="FBPtase"/>
</dbReference>
<dbReference type="InterPro" id="IPR020548">
    <property type="entry name" value="Fructose_bisphosphatase_AS"/>
</dbReference>
<dbReference type="NCBIfam" id="NF006779">
    <property type="entry name" value="PRK09293.1-3"/>
    <property type="match status" value="1"/>
</dbReference>
<dbReference type="PANTHER" id="PTHR11556">
    <property type="entry name" value="FRUCTOSE-1,6-BISPHOSPHATASE-RELATED"/>
    <property type="match status" value="1"/>
</dbReference>
<dbReference type="PANTHER" id="PTHR11556:SF35">
    <property type="entry name" value="SEDOHEPTULOSE-1,7-BISPHOSPHATASE, CHLOROPLASTIC"/>
    <property type="match status" value="1"/>
</dbReference>
<dbReference type="Pfam" id="PF00316">
    <property type="entry name" value="FBPase"/>
    <property type="match status" value="1"/>
</dbReference>
<dbReference type="Pfam" id="PF18913">
    <property type="entry name" value="FBPase_C"/>
    <property type="match status" value="1"/>
</dbReference>
<dbReference type="PIRSF" id="PIRSF500210">
    <property type="entry name" value="FBPtase"/>
    <property type="match status" value="1"/>
</dbReference>
<dbReference type="PIRSF" id="PIRSF000904">
    <property type="entry name" value="FBPtase_SBPase"/>
    <property type="match status" value="1"/>
</dbReference>
<dbReference type="PRINTS" id="PR00115">
    <property type="entry name" value="F16BPHPHTASE"/>
</dbReference>
<dbReference type="SUPFAM" id="SSF56655">
    <property type="entry name" value="Carbohydrate phosphatase"/>
    <property type="match status" value="1"/>
</dbReference>
<dbReference type="PROSITE" id="PS00124">
    <property type="entry name" value="FBPASE"/>
    <property type="match status" value="1"/>
</dbReference>